<accession>A1TJU1</accession>
<protein>
    <recommendedName>
        <fullName evidence="1">Small ribosomal subunit protein uS4</fullName>
    </recommendedName>
    <alternativeName>
        <fullName evidence="3">30S ribosomal protein S4</fullName>
    </alternativeName>
</protein>
<reference key="1">
    <citation type="submission" date="2006-12" db="EMBL/GenBank/DDBJ databases">
        <title>Complete sequence of Acidovorax avenae subsp. citrulli AAC00-1.</title>
        <authorList>
            <person name="Copeland A."/>
            <person name="Lucas S."/>
            <person name="Lapidus A."/>
            <person name="Barry K."/>
            <person name="Detter J.C."/>
            <person name="Glavina del Rio T."/>
            <person name="Dalin E."/>
            <person name="Tice H."/>
            <person name="Pitluck S."/>
            <person name="Kiss H."/>
            <person name="Brettin T."/>
            <person name="Bruce D."/>
            <person name="Han C."/>
            <person name="Tapia R."/>
            <person name="Gilna P."/>
            <person name="Schmutz J."/>
            <person name="Larimer F."/>
            <person name="Land M."/>
            <person name="Hauser L."/>
            <person name="Kyrpides N."/>
            <person name="Kim E."/>
            <person name="Stahl D."/>
            <person name="Richardson P."/>
        </authorList>
    </citation>
    <scope>NUCLEOTIDE SEQUENCE [LARGE SCALE GENOMIC DNA]</scope>
    <source>
        <strain>AAC00-1</strain>
    </source>
</reference>
<proteinExistence type="inferred from homology"/>
<dbReference type="EMBL" id="CP000512">
    <property type="protein sequence ID" value="ABM31229.1"/>
    <property type="molecule type" value="Genomic_DNA"/>
</dbReference>
<dbReference type="RefSeq" id="WP_011793800.1">
    <property type="nucleotide sequence ID" value="NC_008752.1"/>
</dbReference>
<dbReference type="SMR" id="A1TJU1"/>
<dbReference type="STRING" id="397945.Aave_0625"/>
<dbReference type="GeneID" id="79790339"/>
<dbReference type="KEGG" id="aav:Aave_0625"/>
<dbReference type="eggNOG" id="COG0522">
    <property type="taxonomic scope" value="Bacteria"/>
</dbReference>
<dbReference type="HOGENOM" id="CLU_092403_0_2_4"/>
<dbReference type="OrthoDB" id="9803672at2"/>
<dbReference type="Proteomes" id="UP000002596">
    <property type="component" value="Chromosome"/>
</dbReference>
<dbReference type="GO" id="GO:0015935">
    <property type="term" value="C:small ribosomal subunit"/>
    <property type="evidence" value="ECO:0007669"/>
    <property type="project" value="InterPro"/>
</dbReference>
<dbReference type="GO" id="GO:0019843">
    <property type="term" value="F:rRNA binding"/>
    <property type="evidence" value="ECO:0007669"/>
    <property type="project" value="UniProtKB-UniRule"/>
</dbReference>
<dbReference type="GO" id="GO:0003735">
    <property type="term" value="F:structural constituent of ribosome"/>
    <property type="evidence" value="ECO:0007669"/>
    <property type="project" value="InterPro"/>
</dbReference>
<dbReference type="GO" id="GO:0042274">
    <property type="term" value="P:ribosomal small subunit biogenesis"/>
    <property type="evidence" value="ECO:0007669"/>
    <property type="project" value="TreeGrafter"/>
</dbReference>
<dbReference type="GO" id="GO:0006412">
    <property type="term" value="P:translation"/>
    <property type="evidence" value="ECO:0007669"/>
    <property type="project" value="UniProtKB-UniRule"/>
</dbReference>
<dbReference type="CDD" id="cd00165">
    <property type="entry name" value="S4"/>
    <property type="match status" value="1"/>
</dbReference>
<dbReference type="FunFam" id="1.10.1050.10:FF:000001">
    <property type="entry name" value="30S ribosomal protein S4"/>
    <property type="match status" value="1"/>
</dbReference>
<dbReference type="FunFam" id="3.10.290.10:FF:000001">
    <property type="entry name" value="30S ribosomal protein S4"/>
    <property type="match status" value="1"/>
</dbReference>
<dbReference type="Gene3D" id="1.10.1050.10">
    <property type="entry name" value="Ribosomal Protein S4 Delta 41, Chain A, domain 1"/>
    <property type="match status" value="1"/>
</dbReference>
<dbReference type="Gene3D" id="3.10.290.10">
    <property type="entry name" value="RNA-binding S4 domain"/>
    <property type="match status" value="1"/>
</dbReference>
<dbReference type="HAMAP" id="MF_01306_B">
    <property type="entry name" value="Ribosomal_uS4_B"/>
    <property type="match status" value="1"/>
</dbReference>
<dbReference type="InterPro" id="IPR022801">
    <property type="entry name" value="Ribosomal_uS4"/>
</dbReference>
<dbReference type="InterPro" id="IPR005709">
    <property type="entry name" value="Ribosomal_uS4_bac-type"/>
</dbReference>
<dbReference type="InterPro" id="IPR018079">
    <property type="entry name" value="Ribosomal_uS4_CS"/>
</dbReference>
<dbReference type="InterPro" id="IPR001912">
    <property type="entry name" value="Ribosomal_uS4_N"/>
</dbReference>
<dbReference type="InterPro" id="IPR002942">
    <property type="entry name" value="S4_RNA-bd"/>
</dbReference>
<dbReference type="InterPro" id="IPR036986">
    <property type="entry name" value="S4_RNA-bd_sf"/>
</dbReference>
<dbReference type="NCBIfam" id="NF003717">
    <property type="entry name" value="PRK05327.1"/>
    <property type="match status" value="1"/>
</dbReference>
<dbReference type="NCBIfam" id="TIGR01017">
    <property type="entry name" value="rpsD_bact"/>
    <property type="match status" value="1"/>
</dbReference>
<dbReference type="PANTHER" id="PTHR11831">
    <property type="entry name" value="30S 40S RIBOSOMAL PROTEIN"/>
    <property type="match status" value="1"/>
</dbReference>
<dbReference type="PANTHER" id="PTHR11831:SF4">
    <property type="entry name" value="SMALL RIBOSOMAL SUBUNIT PROTEIN US4M"/>
    <property type="match status" value="1"/>
</dbReference>
<dbReference type="Pfam" id="PF00163">
    <property type="entry name" value="Ribosomal_S4"/>
    <property type="match status" value="1"/>
</dbReference>
<dbReference type="Pfam" id="PF01479">
    <property type="entry name" value="S4"/>
    <property type="match status" value="1"/>
</dbReference>
<dbReference type="SMART" id="SM01390">
    <property type="entry name" value="Ribosomal_S4"/>
    <property type="match status" value="1"/>
</dbReference>
<dbReference type="SMART" id="SM00363">
    <property type="entry name" value="S4"/>
    <property type="match status" value="1"/>
</dbReference>
<dbReference type="SUPFAM" id="SSF55174">
    <property type="entry name" value="Alpha-L RNA-binding motif"/>
    <property type="match status" value="1"/>
</dbReference>
<dbReference type="PROSITE" id="PS00632">
    <property type="entry name" value="RIBOSOMAL_S4"/>
    <property type="match status" value="1"/>
</dbReference>
<dbReference type="PROSITE" id="PS50889">
    <property type="entry name" value="S4"/>
    <property type="match status" value="1"/>
</dbReference>
<name>RS4_PARC0</name>
<evidence type="ECO:0000255" key="1">
    <source>
        <dbReference type="HAMAP-Rule" id="MF_01306"/>
    </source>
</evidence>
<evidence type="ECO:0000256" key="2">
    <source>
        <dbReference type="SAM" id="MobiDB-lite"/>
    </source>
</evidence>
<evidence type="ECO:0000305" key="3"/>
<gene>
    <name evidence="1" type="primary">rpsD</name>
    <name type="ordered locus">Aave_0625</name>
</gene>
<comment type="function">
    <text evidence="1">One of the primary rRNA binding proteins, it binds directly to 16S rRNA where it nucleates assembly of the body of the 30S subunit.</text>
</comment>
<comment type="function">
    <text evidence="1">With S5 and S12 plays an important role in translational accuracy.</text>
</comment>
<comment type="subunit">
    <text evidence="1">Part of the 30S ribosomal subunit. Contacts protein S5. The interaction surface between S4 and S5 is involved in control of translational fidelity.</text>
</comment>
<comment type="similarity">
    <text evidence="1">Belongs to the universal ribosomal protein uS4 family.</text>
</comment>
<sequence>MARYLGPKAKLSRREGTDLFLKSARRSIADKAKFDSKPGQHGRTSGARTSDFGLQLREKQKVKRMYGVLEKQFRRYFEAADRRKGNTGANLLSLLESRLDNVVYRMGFGSTRAEARQLVSHKAITVNGQSVNIASYLVKPGDVVAVREKSKKQARIVEALQLAQQVGIPAWVEVNADKVEGTFKKAPDRDEFGADINESLIVELYSR</sequence>
<organism>
    <name type="scientific">Paracidovorax citrulli (strain AAC00-1)</name>
    <name type="common">Acidovorax citrulli</name>
    <dbReference type="NCBI Taxonomy" id="397945"/>
    <lineage>
        <taxon>Bacteria</taxon>
        <taxon>Pseudomonadati</taxon>
        <taxon>Pseudomonadota</taxon>
        <taxon>Betaproteobacteria</taxon>
        <taxon>Burkholderiales</taxon>
        <taxon>Comamonadaceae</taxon>
        <taxon>Paracidovorax</taxon>
    </lineage>
</organism>
<keyword id="KW-0687">Ribonucleoprotein</keyword>
<keyword id="KW-0689">Ribosomal protein</keyword>
<keyword id="KW-0694">RNA-binding</keyword>
<keyword id="KW-0699">rRNA-binding</keyword>
<feature type="chain" id="PRO_0000293226" description="Small ribosomal subunit protein uS4">
    <location>
        <begin position="1"/>
        <end position="207"/>
    </location>
</feature>
<feature type="domain" description="S4 RNA-binding" evidence="1">
    <location>
        <begin position="97"/>
        <end position="157"/>
    </location>
</feature>
<feature type="region of interest" description="Disordered" evidence="2">
    <location>
        <begin position="31"/>
        <end position="53"/>
    </location>
</feature>